<protein>
    <recommendedName>
        <fullName>Growth arrest and DNA damage-inducible protein GADD45 gamma</fullName>
    </recommendedName>
    <alternativeName>
        <fullName>Cytokine-responsive protein CR6</fullName>
    </alternativeName>
</protein>
<feature type="chain" id="PRO_0000148337" description="Growth arrest and DNA damage-inducible protein GADD45 gamma">
    <location>
        <begin position="1"/>
        <end position="159"/>
    </location>
</feature>
<feature type="region of interest" description="Homodimerization" evidence="1">
    <location>
        <begin position="43"/>
        <end position="86"/>
    </location>
</feature>
<feature type="helix" evidence="3">
    <location>
        <begin position="22"/>
        <end position="36"/>
    </location>
</feature>
<feature type="strand" evidence="3">
    <location>
        <begin position="39"/>
        <end position="42"/>
    </location>
</feature>
<feature type="helix" evidence="3">
    <location>
        <begin position="43"/>
        <end position="52"/>
    </location>
</feature>
<feature type="helix" evidence="3">
    <location>
        <begin position="54"/>
        <end position="56"/>
    </location>
</feature>
<feature type="strand" evidence="3">
    <location>
        <begin position="57"/>
        <end position="63"/>
    </location>
</feature>
<feature type="helix" evidence="3">
    <location>
        <begin position="67"/>
        <end position="70"/>
    </location>
</feature>
<feature type="helix" evidence="3">
    <location>
        <begin position="72"/>
        <end position="87"/>
    </location>
</feature>
<feature type="strand" evidence="3">
    <location>
        <begin position="91"/>
        <end position="95"/>
    </location>
</feature>
<feature type="helix" evidence="3">
    <location>
        <begin position="98"/>
        <end position="104"/>
    </location>
</feature>
<feature type="strand" evidence="3">
    <location>
        <begin position="118"/>
        <end position="123"/>
    </location>
</feature>
<feature type="helix" evidence="3">
    <location>
        <begin position="133"/>
        <end position="147"/>
    </location>
</feature>
<proteinExistence type="evidence at protein level"/>
<evidence type="ECO:0000250" key="1"/>
<evidence type="ECO:0000305" key="2"/>
<evidence type="ECO:0007829" key="3">
    <source>
        <dbReference type="PDB" id="3CG6"/>
    </source>
</evidence>
<reference key="1">
    <citation type="journal article" date="1999" name="Oncogene">
        <title>CR6: a third member in the MyD118 and Gadd45 gene family which functions in negative growth control.</title>
        <authorList>
            <person name="Zhang W."/>
            <person name="Bae I."/>
            <person name="Krishnaraju K."/>
            <person name="Azam N."/>
            <person name="Fan W."/>
            <person name="Smith K."/>
            <person name="Hoffman B."/>
            <person name="Liebermann D.A."/>
        </authorList>
    </citation>
    <scope>NUCLEOTIDE SEQUENCE [MRNA]</scope>
</reference>
<reference key="2">
    <citation type="journal article" date="2005" name="Science">
        <title>The transcriptional landscape of the mammalian genome.</title>
        <authorList>
            <person name="Carninci P."/>
            <person name="Kasukawa T."/>
            <person name="Katayama S."/>
            <person name="Gough J."/>
            <person name="Frith M.C."/>
            <person name="Maeda N."/>
            <person name="Oyama R."/>
            <person name="Ravasi T."/>
            <person name="Lenhard B."/>
            <person name="Wells C."/>
            <person name="Kodzius R."/>
            <person name="Shimokawa K."/>
            <person name="Bajic V.B."/>
            <person name="Brenner S.E."/>
            <person name="Batalov S."/>
            <person name="Forrest A.R."/>
            <person name="Zavolan M."/>
            <person name="Davis M.J."/>
            <person name="Wilming L.G."/>
            <person name="Aidinis V."/>
            <person name="Allen J.E."/>
            <person name="Ambesi-Impiombato A."/>
            <person name="Apweiler R."/>
            <person name="Aturaliya R.N."/>
            <person name="Bailey T.L."/>
            <person name="Bansal M."/>
            <person name="Baxter L."/>
            <person name="Beisel K.W."/>
            <person name="Bersano T."/>
            <person name="Bono H."/>
            <person name="Chalk A.M."/>
            <person name="Chiu K.P."/>
            <person name="Choudhary V."/>
            <person name="Christoffels A."/>
            <person name="Clutterbuck D.R."/>
            <person name="Crowe M.L."/>
            <person name="Dalla E."/>
            <person name="Dalrymple B.P."/>
            <person name="de Bono B."/>
            <person name="Della Gatta G."/>
            <person name="di Bernardo D."/>
            <person name="Down T."/>
            <person name="Engstrom P."/>
            <person name="Fagiolini M."/>
            <person name="Faulkner G."/>
            <person name="Fletcher C.F."/>
            <person name="Fukushima T."/>
            <person name="Furuno M."/>
            <person name="Futaki S."/>
            <person name="Gariboldi M."/>
            <person name="Georgii-Hemming P."/>
            <person name="Gingeras T.R."/>
            <person name="Gojobori T."/>
            <person name="Green R.E."/>
            <person name="Gustincich S."/>
            <person name="Harbers M."/>
            <person name="Hayashi Y."/>
            <person name="Hensch T.K."/>
            <person name="Hirokawa N."/>
            <person name="Hill D."/>
            <person name="Huminiecki L."/>
            <person name="Iacono M."/>
            <person name="Ikeo K."/>
            <person name="Iwama A."/>
            <person name="Ishikawa T."/>
            <person name="Jakt M."/>
            <person name="Kanapin A."/>
            <person name="Katoh M."/>
            <person name="Kawasawa Y."/>
            <person name="Kelso J."/>
            <person name="Kitamura H."/>
            <person name="Kitano H."/>
            <person name="Kollias G."/>
            <person name="Krishnan S.P."/>
            <person name="Kruger A."/>
            <person name="Kummerfeld S.K."/>
            <person name="Kurochkin I.V."/>
            <person name="Lareau L.F."/>
            <person name="Lazarevic D."/>
            <person name="Lipovich L."/>
            <person name="Liu J."/>
            <person name="Liuni S."/>
            <person name="McWilliam S."/>
            <person name="Madan Babu M."/>
            <person name="Madera M."/>
            <person name="Marchionni L."/>
            <person name="Matsuda H."/>
            <person name="Matsuzawa S."/>
            <person name="Miki H."/>
            <person name="Mignone F."/>
            <person name="Miyake S."/>
            <person name="Morris K."/>
            <person name="Mottagui-Tabar S."/>
            <person name="Mulder N."/>
            <person name="Nakano N."/>
            <person name="Nakauchi H."/>
            <person name="Ng P."/>
            <person name="Nilsson R."/>
            <person name="Nishiguchi S."/>
            <person name="Nishikawa S."/>
            <person name="Nori F."/>
            <person name="Ohara O."/>
            <person name="Okazaki Y."/>
            <person name="Orlando V."/>
            <person name="Pang K.C."/>
            <person name="Pavan W.J."/>
            <person name="Pavesi G."/>
            <person name="Pesole G."/>
            <person name="Petrovsky N."/>
            <person name="Piazza S."/>
            <person name="Reed J."/>
            <person name="Reid J.F."/>
            <person name="Ring B.Z."/>
            <person name="Ringwald M."/>
            <person name="Rost B."/>
            <person name="Ruan Y."/>
            <person name="Salzberg S.L."/>
            <person name="Sandelin A."/>
            <person name="Schneider C."/>
            <person name="Schoenbach C."/>
            <person name="Sekiguchi K."/>
            <person name="Semple C.A."/>
            <person name="Seno S."/>
            <person name="Sessa L."/>
            <person name="Sheng Y."/>
            <person name="Shibata Y."/>
            <person name="Shimada H."/>
            <person name="Shimada K."/>
            <person name="Silva D."/>
            <person name="Sinclair B."/>
            <person name="Sperling S."/>
            <person name="Stupka E."/>
            <person name="Sugiura K."/>
            <person name="Sultana R."/>
            <person name="Takenaka Y."/>
            <person name="Taki K."/>
            <person name="Tammoja K."/>
            <person name="Tan S.L."/>
            <person name="Tang S."/>
            <person name="Taylor M.S."/>
            <person name="Tegner J."/>
            <person name="Teichmann S.A."/>
            <person name="Ueda H.R."/>
            <person name="van Nimwegen E."/>
            <person name="Verardo R."/>
            <person name="Wei C.L."/>
            <person name="Yagi K."/>
            <person name="Yamanishi H."/>
            <person name="Zabarovsky E."/>
            <person name="Zhu S."/>
            <person name="Zimmer A."/>
            <person name="Hide W."/>
            <person name="Bult C."/>
            <person name="Grimmond S.M."/>
            <person name="Teasdale R.D."/>
            <person name="Liu E.T."/>
            <person name="Brusic V."/>
            <person name="Quackenbush J."/>
            <person name="Wahlestedt C."/>
            <person name="Mattick J.S."/>
            <person name="Hume D.A."/>
            <person name="Kai C."/>
            <person name="Sasaki D."/>
            <person name="Tomaru Y."/>
            <person name="Fukuda S."/>
            <person name="Kanamori-Katayama M."/>
            <person name="Suzuki M."/>
            <person name="Aoki J."/>
            <person name="Arakawa T."/>
            <person name="Iida J."/>
            <person name="Imamura K."/>
            <person name="Itoh M."/>
            <person name="Kato T."/>
            <person name="Kawaji H."/>
            <person name="Kawagashira N."/>
            <person name="Kawashima T."/>
            <person name="Kojima M."/>
            <person name="Kondo S."/>
            <person name="Konno H."/>
            <person name="Nakano K."/>
            <person name="Ninomiya N."/>
            <person name="Nishio T."/>
            <person name="Okada M."/>
            <person name="Plessy C."/>
            <person name="Shibata K."/>
            <person name="Shiraki T."/>
            <person name="Suzuki S."/>
            <person name="Tagami M."/>
            <person name="Waki K."/>
            <person name="Watahiki A."/>
            <person name="Okamura-Oho Y."/>
            <person name="Suzuki H."/>
            <person name="Kawai J."/>
            <person name="Hayashizaki Y."/>
        </authorList>
    </citation>
    <scope>NUCLEOTIDE SEQUENCE [LARGE SCALE MRNA]</scope>
    <source>
        <strain>C57BL/6J</strain>
        <tissue>Kidney</tissue>
    </source>
</reference>
<accession>Q9Z111</accession>
<comment type="function">
    <text>Involved in the regulation of growth and apoptosis. Mediates activation of stress-responsive MTK1/MEKK4 MAPKKK.</text>
</comment>
<comment type="subunit">
    <text evidence="1">Undergoes concentration-dependent homodimerization, which is required for growth inhibititory activity and enhances interaction with PCNA. Interacts with GADD45GIP1. Interacts with PCNA (By similarity).</text>
</comment>
<comment type="interaction">
    <interactant intactId="EBI-1173616">
        <id>Q9Z111</id>
    </interactant>
    <interactant intactId="EBI-1174103">
        <id>P39689</id>
        <label>Cdkn1a</label>
    </interactant>
    <organismsDiffer>false</organismsDiffer>
    <experiments>2</experiments>
</comment>
<comment type="interaction">
    <interactant intactId="EBI-1173616">
        <id>Q9Z111</id>
    </interactant>
    <interactant intactId="EBI-1173616">
        <id>Q9Z111</id>
        <label>Gadd45g</label>
    </interactant>
    <organismsDiffer>false</organismsDiffer>
    <experiments>5</experiments>
</comment>
<comment type="interaction">
    <interactant intactId="EBI-1173616">
        <id>Q9Z111</id>
    </interactant>
    <interactant intactId="EBI-1173716">
        <id>P17918</id>
        <label>Pcna</label>
    </interactant>
    <organismsDiffer>false</organismsDiffer>
    <experiments>2</experiments>
</comment>
<comment type="interaction">
    <interactant intactId="EBI-1173616">
        <id>Q9Z111</id>
    </interactant>
    <interactant intactId="EBI-358311">
        <id>P12004</id>
        <label>PCNA</label>
    </interactant>
    <organismsDiffer>true</organismsDiffer>
    <experiments>9</experiments>
</comment>
<comment type="domain">
    <text evidence="1">Two central helices mediate homodimerization through parallel packing.</text>
</comment>
<comment type="similarity">
    <text evidence="2">Belongs to the GADD45 family.</text>
</comment>
<sequence length="159" mass="17211">MTLEEVRGQDTVPESTARMQGAGKALHELLLSAHGQGCLTAGVYESAKVLNVDPDNVTFCVLAADEEDEGDIALQIHFTLIQAFCCENDIDIVRVGDVQRLAAIVGADEEGGAPGDLHCILISNPNEDTWKDPALEKLSLFCEESRSFNDWVPSITLPE</sequence>
<keyword id="KW-0002">3D-structure</keyword>
<keyword id="KW-0053">Apoptosis</keyword>
<keyword id="KW-0217">Developmental protein</keyword>
<keyword id="KW-0221">Differentiation</keyword>
<keyword id="KW-1185">Reference proteome</keyword>
<name>GA45G_MOUSE</name>
<gene>
    <name type="primary">Gadd45g</name>
    <name type="synonym">Cr6</name>
</gene>
<organism>
    <name type="scientific">Mus musculus</name>
    <name type="common">Mouse</name>
    <dbReference type="NCBI Taxonomy" id="10090"/>
    <lineage>
        <taxon>Eukaryota</taxon>
        <taxon>Metazoa</taxon>
        <taxon>Chordata</taxon>
        <taxon>Craniata</taxon>
        <taxon>Vertebrata</taxon>
        <taxon>Euteleostomi</taxon>
        <taxon>Mammalia</taxon>
        <taxon>Eutheria</taxon>
        <taxon>Euarchontoglires</taxon>
        <taxon>Glires</taxon>
        <taxon>Rodentia</taxon>
        <taxon>Myomorpha</taxon>
        <taxon>Muroidea</taxon>
        <taxon>Muridae</taxon>
        <taxon>Murinae</taxon>
        <taxon>Mus</taxon>
        <taxon>Mus</taxon>
    </lineage>
</organism>
<dbReference type="EMBL" id="AF055638">
    <property type="protein sequence ID" value="AAD15798.1"/>
    <property type="molecule type" value="mRNA"/>
</dbReference>
<dbReference type="EMBL" id="AK002237">
    <property type="protein sequence ID" value="BAB21955.1"/>
    <property type="molecule type" value="mRNA"/>
</dbReference>
<dbReference type="PDB" id="3CG6">
    <property type="method" value="X-ray"/>
    <property type="resolution" value="1.70 A"/>
    <property type="chains" value="A/B=15-159"/>
</dbReference>
<dbReference type="PDBsum" id="3CG6"/>
<dbReference type="SMR" id="Q9Z111"/>
<dbReference type="DIP" id="DIP-29978N"/>
<dbReference type="FunCoup" id="Q9Z111">
    <property type="interactions" value="1788"/>
</dbReference>
<dbReference type="IntAct" id="Q9Z111">
    <property type="interactions" value="3"/>
</dbReference>
<dbReference type="STRING" id="10090.ENSMUSP00000021903"/>
<dbReference type="PaxDb" id="10090-ENSMUSP00000021903"/>
<dbReference type="AGR" id="MGI:1346325"/>
<dbReference type="MGI" id="MGI:1346325">
    <property type="gene designation" value="Gadd45g"/>
</dbReference>
<dbReference type="eggNOG" id="ENOG502RXKU">
    <property type="taxonomic scope" value="Eukaryota"/>
</dbReference>
<dbReference type="InParanoid" id="Q9Z111"/>
<dbReference type="PhylomeDB" id="Q9Z111"/>
<dbReference type="ChiTaRS" id="Gadd45g">
    <property type="organism name" value="mouse"/>
</dbReference>
<dbReference type="EvolutionaryTrace" id="Q9Z111"/>
<dbReference type="PRO" id="PR:Q9Z111"/>
<dbReference type="Proteomes" id="UP000000589">
    <property type="component" value="Unplaced"/>
</dbReference>
<dbReference type="RNAct" id="Q9Z111">
    <property type="molecule type" value="protein"/>
</dbReference>
<dbReference type="GO" id="GO:0005634">
    <property type="term" value="C:nucleus"/>
    <property type="evidence" value="ECO:0000304"/>
    <property type="project" value="MGI"/>
</dbReference>
<dbReference type="GO" id="GO:0042802">
    <property type="term" value="F:identical protein binding"/>
    <property type="evidence" value="ECO:0000353"/>
    <property type="project" value="IntAct"/>
</dbReference>
<dbReference type="GO" id="GO:0006915">
    <property type="term" value="P:apoptotic process"/>
    <property type="evidence" value="ECO:0007669"/>
    <property type="project" value="UniProtKB-KW"/>
</dbReference>
<dbReference type="GO" id="GO:0120162">
    <property type="term" value="P:positive regulation of cold-induced thermogenesis"/>
    <property type="evidence" value="ECO:0000315"/>
    <property type="project" value="YuBioLab"/>
</dbReference>
<dbReference type="GO" id="GO:0043410">
    <property type="term" value="P:positive regulation of MAPK cascade"/>
    <property type="evidence" value="ECO:0000314"/>
    <property type="project" value="MGI"/>
</dbReference>
<dbReference type="GO" id="GO:0051726">
    <property type="term" value="P:regulation of cell cycle"/>
    <property type="evidence" value="ECO:0000314"/>
    <property type="project" value="MGI"/>
</dbReference>
<dbReference type="GO" id="GO:0045063">
    <property type="term" value="P:T-helper 1 cell differentiation"/>
    <property type="evidence" value="ECO:0000304"/>
    <property type="project" value="MGI"/>
</dbReference>
<dbReference type="FunFam" id="3.30.1330.30:FF:000018">
    <property type="entry name" value="growth arrest and DNA damage-inducible protein GADD45 gamma"/>
    <property type="match status" value="1"/>
</dbReference>
<dbReference type="Gene3D" id="3.30.1330.30">
    <property type="match status" value="1"/>
</dbReference>
<dbReference type="InterPro" id="IPR024824">
    <property type="entry name" value="GADD45"/>
</dbReference>
<dbReference type="InterPro" id="IPR029064">
    <property type="entry name" value="Ribosomal_eL30-like_sf"/>
</dbReference>
<dbReference type="InterPro" id="IPR004038">
    <property type="entry name" value="Ribosomal_eL8/eL30/eS12/Gad45"/>
</dbReference>
<dbReference type="PANTHER" id="PTHR10411">
    <property type="entry name" value="GROWTH ARREST AND DNA DAMAGE-INDUCIBLE PROTEIN GADD45"/>
    <property type="match status" value="1"/>
</dbReference>
<dbReference type="PANTHER" id="PTHR10411:SF4">
    <property type="entry name" value="GROWTH ARREST AND DNA DAMAGE-INDUCIBLE PROTEIN GADD45 GAMMA"/>
    <property type="match status" value="1"/>
</dbReference>
<dbReference type="Pfam" id="PF01248">
    <property type="entry name" value="Ribosomal_L7Ae"/>
    <property type="match status" value="1"/>
</dbReference>
<dbReference type="SUPFAM" id="SSF55315">
    <property type="entry name" value="L30e-like"/>
    <property type="match status" value="1"/>
</dbReference>